<comment type="function">
    <text evidence="1">DNA-dependent RNA polymerase catalyzes the transcription of DNA into RNA using the four ribonucleoside triphosphates as substrates.</text>
</comment>
<comment type="catalytic activity">
    <reaction evidence="1">
        <text>RNA(n) + a ribonucleoside 5'-triphosphate = RNA(n+1) + diphosphate</text>
        <dbReference type="Rhea" id="RHEA:21248"/>
        <dbReference type="Rhea" id="RHEA-COMP:14527"/>
        <dbReference type="Rhea" id="RHEA-COMP:17342"/>
        <dbReference type="ChEBI" id="CHEBI:33019"/>
        <dbReference type="ChEBI" id="CHEBI:61557"/>
        <dbReference type="ChEBI" id="CHEBI:140395"/>
        <dbReference type="EC" id="2.7.7.6"/>
    </reaction>
</comment>
<comment type="subunit">
    <text evidence="1">The RNAP catalytic core consists of 2 alpha, 1 beta, 1 beta' and 1 omega subunit. When a sigma factor is associated with the core the holoenzyme is formed, which can initiate transcription.</text>
</comment>
<comment type="similarity">
    <text evidence="1">Belongs to the RNA polymerase beta chain family.</text>
</comment>
<dbReference type="EC" id="2.7.7.6" evidence="1"/>
<dbReference type="EMBL" id="CP000879">
    <property type="protein sequence ID" value="ABX31097.1"/>
    <property type="molecule type" value="Genomic_DNA"/>
</dbReference>
<dbReference type="RefSeq" id="WP_012208204.1">
    <property type="nucleotide sequence ID" value="NC_010003.1"/>
</dbReference>
<dbReference type="SMR" id="A9BF33"/>
<dbReference type="STRING" id="403833.Pmob_0355"/>
<dbReference type="KEGG" id="pmo:Pmob_0355"/>
<dbReference type="eggNOG" id="COG0085">
    <property type="taxonomic scope" value="Bacteria"/>
</dbReference>
<dbReference type="HOGENOM" id="CLU_000524_4_3_0"/>
<dbReference type="OrthoDB" id="9803954at2"/>
<dbReference type="Proteomes" id="UP000000789">
    <property type="component" value="Chromosome"/>
</dbReference>
<dbReference type="GO" id="GO:0000428">
    <property type="term" value="C:DNA-directed RNA polymerase complex"/>
    <property type="evidence" value="ECO:0007669"/>
    <property type="project" value="UniProtKB-KW"/>
</dbReference>
<dbReference type="GO" id="GO:0003677">
    <property type="term" value="F:DNA binding"/>
    <property type="evidence" value="ECO:0007669"/>
    <property type="project" value="UniProtKB-UniRule"/>
</dbReference>
<dbReference type="GO" id="GO:0003899">
    <property type="term" value="F:DNA-directed RNA polymerase activity"/>
    <property type="evidence" value="ECO:0007669"/>
    <property type="project" value="UniProtKB-UniRule"/>
</dbReference>
<dbReference type="GO" id="GO:0032549">
    <property type="term" value="F:ribonucleoside binding"/>
    <property type="evidence" value="ECO:0007669"/>
    <property type="project" value="InterPro"/>
</dbReference>
<dbReference type="GO" id="GO:0006351">
    <property type="term" value="P:DNA-templated transcription"/>
    <property type="evidence" value="ECO:0007669"/>
    <property type="project" value="UniProtKB-UniRule"/>
</dbReference>
<dbReference type="CDD" id="cd00653">
    <property type="entry name" value="RNA_pol_B_RPB2"/>
    <property type="match status" value="1"/>
</dbReference>
<dbReference type="Gene3D" id="2.40.50.100">
    <property type="match status" value="1"/>
</dbReference>
<dbReference type="Gene3D" id="2.40.50.150">
    <property type="match status" value="1"/>
</dbReference>
<dbReference type="Gene3D" id="3.90.1100.10">
    <property type="match status" value="2"/>
</dbReference>
<dbReference type="Gene3D" id="2.30.150.10">
    <property type="entry name" value="DNA-directed RNA polymerase, beta subunit, external 1 domain"/>
    <property type="match status" value="1"/>
</dbReference>
<dbReference type="Gene3D" id="2.40.270.10">
    <property type="entry name" value="DNA-directed RNA polymerase, subunit 2, domain 6"/>
    <property type="match status" value="1"/>
</dbReference>
<dbReference type="Gene3D" id="3.90.1800.10">
    <property type="entry name" value="RNA polymerase alpha subunit dimerisation domain"/>
    <property type="match status" value="1"/>
</dbReference>
<dbReference type="HAMAP" id="MF_01321">
    <property type="entry name" value="RNApol_bact_RpoB"/>
    <property type="match status" value="1"/>
</dbReference>
<dbReference type="InterPro" id="IPR042107">
    <property type="entry name" value="DNA-dir_RNA_pol_bsu_ext_1_sf"/>
</dbReference>
<dbReference type="InterPro" id="IPR019462">
    <property type="entry name" value="DNA-dir_RNA_pol_bsu_external_1"/>
</dbReference>
<dbReference type="InterPro" id="IPR015712">
    <property type="entry name" value="DNA-dir_RNA_pol_su2"/>
</dbReference>
<dbReference type="InterPro" id="IPR007120">
    <property type="entry name" value="DNA-dir_RNAP_su2_dom"/>
</dbReference>
<dbReference type="InterPro" id="IPR037033">
    <property type="entry name" value="DNA-dir_RNAP_su2_hyb_sf"/>
</dbReference>
<dbReference type="InterPro" id="IPR010243">
    <property type="entry name" value="RNA_pol_bsu_bac"/>
</dbReference>
<dbReference type="InterPro" id="IPR007121">
    <property type="entry name" value="RNA_pol_bsu_CS"/>
</dbReference>
<dbReference type="InterPro" id="IPR007644">
    <property type="entry name" value="RNA_pol_bsu_protrusion"/>
</dbReference>
<dbReference type="InterPro" id="IPR007645">
    <property type="entry name" value="RNA_pol_Rpb2_3"/>
</dbReference>
<dbReference type="InterPro" id="IPR007641">
    <property type="entry name" value="RNA_pol_Rpb2_7"/>
</dbReference>
<dbReference type="InterPro" id="IPR014724">
    <property type="entry name" value="RNA_pol_RPB2_OB-fold"/>
</dbReference>
<dbReference type="NCBIfam" id="NF001616">
    <property type="entry name" value="PRK00405.1"/>
    <property type="match status" value="1"/>
</dbReference>
<dbReference type="NCBIfam" id="TIGR02013">
    <property type="entry name" value="rpoB"/>
    <property type="match status" value="1"/>
</dbReference>
<dbReference type="PANTHER" id="PTHR20856">
    <property type="entry name" value="DNA-DIRECTED RNA POLYMERASE I SUBUNIT 2"/>
    <property type="match status" value="1"/>
</dbReference>
<dbReference type="Pfam" id="PF04563">
    <property type="entry name" value="RNA_pol_Rpb2_1"/>
    <property type="match status" value="1"/>
</dbReference>
<dbReference type="Pfam" id="PF04565">
    <property type="entry name" value="RNA_pol_Rpb2_3"/>
    <property type="match status" value="1"/>
</dbReference>
<dbReference type="Pfam" id="PF10385">
    <property type="entry name" value="RNA_pol_Rpb2_45"/>
    <property type="match status" value="1"/>
</dbReference>
<dbReference type="Pfam" id="PF00562">
    <property type="entry name" value="RNA_pol_Rpb2_6"/>
    <property type="match status" value="1"/>
</dbReference>
<dbReference type="Pfam" id="PF04560">
    <property type="entry name" value="RNA_pol_Rpb2_7"/>
    <property type="match status" value="1"/>
</dbReference>
<dbReference type="SUPFAM" id="SSF64484">
    <property type="entry name" value="beta and beta-prime subunits of DNA dependent RNA-polymerase"/>
    <property type="match status" value="1"/>
</dbReference>
<dbReference type="PROSITE" id="PS01166">
    <property type="entry name" value="RNA_POL_BETA"/>
    <property type="match status" value="1"/>
</dbReference>
<proteinExistence type="inferred from homology"/>
<reference key="1">
    <citation type="submission" date="2007-11" db="EMBL/GenBank/DDBJ databases">
        <title>Complete sequence of Petroga mobilis SJ95.</title>
        <authorList>
            <consortium name="US DOE Joint Genome Institute"/>
            <person name="Copeland A."/>
            <person name="Lucas S."/>
            <person name="Lapidus A."/>
            <person name="Barry K."/>
            <person name="Glavina del Rio T."/>
            <person name="Dalin E."/>
            <person name="Tice H."/>
            <person name="Pitluck S."/>
            <person name="Meincke L."/>
            <person name="Brettin T."/>
            <person name="Bruce D."/>
            <person name="Detter J.C."/>
            <person name="Han C."/>
            <person name="Kuske C.R."/>
            <person name="Schmutz J."/>
            <person name="Larimer F."/>
            <person name="Land M."/>
            <person name="Hauser L."/>
            <person name="Kyrpides N."/>
            <person name="Mikhailova N."/>
            <person name="Noll K."/>
            <person name="Richardson P."/>
        </authorList>
    </citation>
    <scope>NUCLEOTIDE SEQUENCE [LARGE SCALE GENOMIC DNA]</scope>
    <source>
        <strain>DSM 10674 / SJ95</strain>
    </source>
</reference>
<organism>
    <name type="scientific">Petrotoga mobilis (strain DSM 10674 / SJ95)</name>
    <dbReference type="NCBI Taxonomy" id="403833"/>
    <lineage>
        <taxon>Bacteria</taxon>
        <taxon>Thermotogati</taxon>
        <taxon>Thermotogota</taxon>
        <taxon>Thermotogae</taxon>
        <taxon>Petrotogales</taxon>
        <taxon>Petrotogaceae</taxon>
        <taxon>Petrotoga</taxon>
    </lineage>
</organism>
<feature type="chain" id="PRO_0000329185" description="DNA-directed RNA polymerase subunit beta">
    <location>
        <begin position="1"/>
        <end position="1187"/>
    </location>
</feature>
<sequence>MNTVVREVGRRERKFFGKVPEKTEIYEDLVKIQKDSFRDFLDKKIMESIKRYMPIKIPVKASGKKNKEFLIDFVDVKFEDSSFSENECRDKGLTYAGKAYLKVRITDSATGEMIEKDDIFLCNIPYMTERGIFIVNGAERVIVNQLVRSPGVYFIKEEETDTSKEMFIAHFLPIKGAWLEILYNPNPGKEVLQVRIDRKRKFNFFLFLRALGYENDLDILRLFPKEIDLDDEVELSNYNNCTVLSDLSFQELDDMDPPRKSTYGMKLYEVLELLKKYEIKSVTVAHLVAEITLEKMKKRYEKEERLTSLEAYKEIFSKLKPTEIPRAQKAKEEIEDMYFNPEKFDFSQIGRQKIQVKLRKAYIDYLREVEKKDISEDMEDKIKYPIKTFAVDKLDIILSARYLLHVKENIEGLDTRDHLGNKRVRSVGELMQIEFERAFSKMIQHAPEKLAGVQSINKISPQSLINSRSIMTAFHQFFASSQLSQFLDQVNPLAELTHKRRLSAIGPGGLKREHAKFEVRDVHHSHYGRMCPIETPEGANIGLITSMAILAKVDEYGFLKTPYYRVKHAKVDLNNIVYLSADEEELYRIAPASAEIGEDGSLVEEYIEARYLGKVSLFHKDEIEYISVTPKQIASVSAALIPFLEHDDANRALMGSNMQRQAVPLLRPQAPFVGTGVEWLAARDSGYLIMAKHKGIVDYVDGRKIVITRLDEENNVLKDSNDEPLKDEYTLLKYVRSNQDMCINQVPIVNVGDVVTKGQAIADGPSMDMGELALGRNIFIGFLPWEGYNFEDAIVVSQELLENDAFTSIHIEVFETKAMDTQLGPEEITADIPNVKKELLRNLDEEGIVKIGSYVSSGDILVGKVTPRGESDTTPEEKLIKSVFGDKGRDIKDSSLTVPHGIEGRVIDVQIFDRKDIPSLEIGVNKYVKVFIATKKTLQVGDKLAGRHGNKGVISTILNKEDMPFLPDGTPLQMLLSPLGVPSRMNIGQVLELHLGWLSMLTNDYYATPIFDGATESEIMDELSKVREEHELYLGDDPDQPNGKIVLRDGRTGEPFDFPVAVGSMYMLKLSHIAKDKIHARSTGPYSLIHQQPLGGKAHFGGQRFGEMEVWALEAHGAAHTLNEMLTYKSDDIKGRNEVYKAILKGENLPEPGIPESFKVLTKELQGLMLDIKLYDEDGNELDVDRL</sequence>
<accession>A9BF33</accession>
<gene>
    <name evidence="1" type="primary">rpoB</name>
    <name type="ordered locus">Pmob_0355</name>
</gene>
<keyword id="KW-0240">DNA-directed RNA polymerase</keyword>
<keyword id="KW-0548">Nucleotidyltransferase</keyword>
<keyword id="KW-0804">Transcription</keyword>
<keyword id="KW-0808">Transferase</keyword>
<evidence type="ECO:0000255" key="1">
    <source>
        <dbReference type="HAMAP-Rule" id="MF_01321"/>
    </source>
</evidence>
<name>RPOB_PETMO</name>
<protein>
    <recommendedName>
        <fullName evidence="1">DNA-directed RNA polymerase subunit beta</fullName>
        <shortName evidence="1">RNAP subunit beta</shortName>
        <ecNumber evidence="1">2.7.7.6</ecNumber>
    </recommendedName>
    <alternativeName>
        <fullName evidence="1">RNA polymerase subunit beta</fullName>
    </alternativeName>
    <alternativeName>
        <fullName evidence="1">Transcriptase subunit beta</fullName>
    </alternativeName>
</protein>